<reference key="1">
    <citation type="journal article" date="2007" name="Proc. Natl. Acad. Sci. U.S.A.">
        <title>Independent sorting-out of thousands of duplicated gene pairs in two yeast species descended from a whole-genome duplication.</title>
        <authorList>
            <person name="Scannell D.R."/>
            <person name="Frank A.C."/>
            <person name="Conant G.C."/>
            <person name="Byrne K.P."/>
            <person name="Woolfit M."/>
            <person name="Wolfe K.H."/>
        </authorList>
    </citation>
    <scope>NUCLEOTIDE SEQUENCE [LARGE SCALE GENOMIC DNA]</scope>
    <source>
        <strain>ATCC 22028 / DSM 70294 / BCRC 21397 / CBS 2163 / NBRC 10782 / NRRL Y-8283 / UCD 57-17</strain>
    </source>
</reference>
<evidence type="ECO:0000250" key="1">
    <source>
        <dbReference type="UniProtKB" id="P38815"/>
    </source>
</evidence>
<evidence type="ECO:0000255" key="2">
    <source>
        <dbReference type="PROSITE-ProRule" id="PRU00147"/>
    </source>
</evidence>
<evidence type="ECO:0000305" key="3"/>
<feature type="chain" id="PRO_0000333497" description="Endosomal/vacuolar adapter protein YPT35">
    <location>
        <begin position="1"/>
        <end position="174"/>
    </location>
</feature>
<feature type="domain" description="PX" evidence="2">
    <location>
        <begin position="34"/>
        <end position="168"/>
    </location>
</feature>
<sequence length="174" mass="20267">MSTRKLNMLTPEPIHLLEEGGDNSEEFVVDEGCQVQRIYVGDGSITTSDEAKFTIWKVTTELIVHKVEPVRVSIPLEIVSYRRYSEFDQLRAEIISKIGKNVQVPELPPKVYWYDYWRFSKINLNRHWLNKRRQGLDNFINKIIKNKDIMESCAKEVNEFLGVSSDVSTRTNSE</sequence>
<name>YPT35_VANPO</name>
<proteinExistence type="inferred from homology"/>
<keyword id="KW-0967">Endosome</keyword>
<keyword id="KW-0472">Membrane</keyword>
<keyword id="KW-1185">Reference proteome</keyword>
<keyword id="KW-0926">Vacuole</keyword>
<protein>
    <recommendedName>
        <fullName evidence="3">Endosomal/vacuolar adapter protein YPT35</fullName>
    </recommendedName>
    <alternativeName>
        <fullName evidence="3">PX domain-containing protein YPT35</fullName>
    </alternativeName>
</protein>
<accession>A7TKX9</accession>
<comment type="function">
    <text evidence="1">Recruits the lipid transfer protein VPS13 to endosomal and vacuolar membranes.</text>
</comment>
<comment type="subcellular location">
    <subcellularLocation>
        <location evidence="1">Endosome membrane</location>
        <topology evidence="1">Peripheral membrane protein</topology>
    </subcellularLocation>
    <subcellularLocation>
        <location evidence="1">Vacuole membrane</location>
        <topology evidence="1">Peripheral membrane protein</topology>
    </subcellularLocation>
</comment>
<comment type="domain">
    <text evidence="1">The PX domain binds phosphatidylinositol 3-phosphate (PtdIns(3)P) which is necessary for peripheral membrane localization.</text>
</comment>
<comment type="similarity">
    <text evidence="3">Belongs to the YPT35 family.</text>
</comment>
<organism>
    <name type="scientific">Vanderwaltozyma polyspora (strain ATCC 22028 / DSM 70294 / BCRC 21397 / CBS 2163 / NBRC 10782 / NRRL Y-8283 / UCD 57-17)</name>
    <name type="common">Kluyveromyces polysporus</name>
    <dbReference type="NCBI Taxonomy" id="436907"/>
    <lineage>
        <taxon>Eukaryota</taxon>
        <taxon>Fungi</taxon>
        <taxon>Dikarya</taxon>
        <taxon>Ascomycota</taxon>
        <taxon>Saccharomycotina</taxon>
        <taxon>Saccharomycetes</taxon>
        <taxon>Saccharomycetales</taxon>
        <taxon>Saccharomycetaceae</taxon>
        <taxon>Vanderwaltozyma</taxon>
    </lineage>
</organism>
<gene>
    <name type="primary">YPT35</name>
    <name type="ORF">Kpol_530p4</name>
</gene>
<dbReference type="EMBL" id="DS480411">
    <property type="protein sequence ID" value="EDO17035.1"/>
    <property type="molecule type" value="Genomic_DNA"/>
</dbReference>
<dbReference type="RefSeq" id="XP_001644893.1">
    <property type="nucleotide sequence ID" value="XM_001644843.1"/>
</dbReference>
<dbReference type="SMR" id="A7TKX9"/>
<dbReference type="FunCoup" id="A7TKX9">
    <property type="interactions" value="102"/>
</dbReference>
<dbReference type="STRING" id="436907.A7TKX9"/>
<dbReference type="GeneID" id="5545225"/>
<dbReference type="KEGG" id="vpo:Kpol_530p4"/>
<dbReference type="eggNOG" id="ENOG502S40T">
    <property type="taxonomic scope" value="Eukaryota"/>
</dbReference>
<dbReference type="HOGENOM" id="CLU_1475537_0_0_1"/>
<dbReference type="InParanoid" id="A7TKX9"/>
<dbReference type="OMA" id="FAVWKIT"/>
<dbReference type="OrthoDB" id="10254720at2759"/>
<dbReference type="PhylomeDB" id="A7TKX9"/>
<dbReference type="Proteomes" id="UP000000267">
    <property type="component" value="Unassembled WGS sequence"/>
</dbReference>
<dbReference type="GO" id="GO:0010008">
    <property type="term" value="C:endosome membrane"/>
    <property type="evidence" value="ECO:0007669"/>
    <property type="project" value="UniProtKB-SubCell"/>
</dbReference>
<dbReference type="GO" id="GO:0071561">
    <property type="term" value="C:nucleus-vacuole junction"/>
    <property type="evidence" value="ECO:0007669"/>
    <property type="project" value="EnsemblFungi"/>
</dbReference>
<dbReference type="GO" id="GO:0005774">
    <property type="term" value="C:vacuolar membrane"/>
    <property type="evidence" value="ECO:0007669"/>
    <property type="project" value="UniProtKB-SubCell"/>
</dbReference>
<dbReference type="GO" id="GO:0032266">
    <property type="term" value="F:phosphatidylinositol-3-phosphate binding"/>
    <property type="evidence" value="ECO:0007669"/>
    <property type="project" value="EnsemblFungi"/>
</dbReference>
<dbReference type="GO" id="GO:0030674">
    <property type="term" value="F:protein-macromolecule adaptor activity"/>
    <property type="evidence" value="ECO:0000250"/>
    <property type="project" value="UniProtKB"/>
</dbReference>
<dbReference type="GO" id="GO:0036010">
    <property type="term" value="P:protein localization to endosome"/>
    <property type="evidence" value="ECO:0007669"/>
    <property type="project" value="EnsemblFungi"/>
</dbReference>
<dbReference type="GO" id="GO:0072657">
    <property type="term" value="P:protein localization to membrane"/>
    <property type="evidence" value="ECO:0000250"/>
    <property type="project" value="UniProtKB"/>
</dbReference>
<dbReference type="CDD" id="cd07280">
    <property type="entry name" value="PX_YPT35"/>
    <property type="match status" value="1"/>
</dbReference>
<dbReference type="Gene3D" id="3.30.1520.10">
    <property type="entry name" value="Phox-like domain"/>
    <property type="match status" value="1"/>
</dbReference>
<dbReference type="InterPro" id="IPR001683">
    <property type="entry name" value="PX_dom"/>
</dbReference>
<dbReference type="InterPro" id="IPR036871">
    <property type="entry name" value="PX_dom_sf"/>
</dbReference>
<dbReference type="InterPro" id="IPR037917">
    <property type="entry name" value="Ypt35_PX"/>
</dbReference>
<dbReference type="Pfam" id="PF00787">
    <property type="entry name" value="PX"/>
    <property type="match status" value="1"/>
</dbReference>
<dbReference type="SMART" id="SM00312">
    <property type="entry name" value="PX"/>
    <property type="match status" value="1"/>
</dbReference>
<dbReference type="SUPFAM" id="SSF64268">
    <property type="entry name" value="PX domain"/>
    <property type="match status" value="1"/>
</dbReference>
<dbReference type="PROSITE" id="PS50195">
    <property type="entry name" value="PX"/>
    <property type="match status" value="1"/>
</dbReference>